<keyword id="KW-0064">Aspartyl protease</keyword>
<keyword id="KW-1003">Cell membrane</keyword>
<keyword id="KW-0378">Hydrolase</keyword>
<keyword id="KW-0472">Membrane</keyword>
<keyword id="KW-0645">Protease</keyword>
<keyword id="KW-0812">Transmembrane</keyword>
<keyword id="KW-1133">Transmembrane helix</keyword>
<organism>
    <name type="scientific">Listeria innocua serovar 6a (strain ATCC BAA-680 / CLIP 11262)</name>
    <dbReference type="NCBI Taxonomy" id="272626"/>
    <lineage>
        <taxon>Bacteria</taxon>
        <taxon>Bacillati</taxon>
        <taxon>Bacillota</taxon>
        <taxon>Bacilli</taxon>
        <taxon>Bacillales</taxon>
        <taxon>Listeriaceae</taxon>
        <taxon>Listeria</taxon>
    </lineage>
</organism>
<dbReference type="EC" id="3.4.23.36" evidence="1"/>
<dbReference type="EMBL" id="AL596170">
    <property type="protein sequence ID" value="CAC97188.1"/>
    <property type="molecule type" value="Genomic_DNA"/>
</dbReference>
<dbReference type="PIR" id="AD1677">
    <property type="entry name" value="AD1677"/>
</dbReference>
<dbReference type="RefSeq" id="WP_003729506.1">
    <property type="nucleotide sequence ID" value="NC_003212.1"/>
</dbReference>
<dbReference type="SMR" id="Q92AG4"/>
<dbReference type="STRING" id="272626.gene:17566316"/>
<dbReference type="GeneID" id="93235296"/>
<dbReference type="KEGG" id="lin:lsp"/>
<dbReference type="eggNOG" id="COG0597">
    <property type="taxonomic scope" value="Bacteria"/>
</dbReference>
<dbReference type="HOGENOM" id="CLU_083252_3_0_9"/>
<dbReference type="OrthoDB" id="9810259at2"/>
<dbReference type="UniPathway" id="UPA00665"/>
<dbReference type="Proteomes" id="UP000002513">
    <property type="component" value="Chromosome"/>
</dbReference>
<dbReference type="GO" id="GO:0005886">
    <property type="term" value="C:plasma membrane"/>
    <property type="evidence" value="ECO:0007669"/>
    <property type="project" value="UniProtKB-SubCell"/>
</dbReference>
<dbReference type="GO" id="GO:0004190">
    <property type="term" value="F:aspartic-type endopeptidase activity"/>
    <property type="evidence" value="ECO:0007669"/>
    <property type="project" value="UniProtKB-UniRule"/>
</dbReference>
<dbReference type="GO" id="GO:0006508">
    <property type="term" value="P:proteolysis"/>
    <property type="evidence" value="ECO:0007669"/>
    <property type="project" value="UniProtKB-KW"/>
</dbReference>
<dbReference type="HAMAP" id="MF_00161">
    <property type="entry name" value="LspA"/>
    <property type="match status" value="1"/>
</dbReference>
<dbReference type="InterPro" id="IPR001872">
    <property type="entry name" value="Peptidase_A8"/>
</dbReference>
<dbReference type="NCBIfam" id="TIGR00077">
    <property type="entry name" value="lspA"/>
    <property type="match status" value="1"/>
</dbReference>
<dbReference type="PANTHER" id="PTHR33695">
    <property type="entry name" value="LIPOPROTEIN SIGNAL PEPTIDASE"/>
    <property type="match status" value="1"/>
</dbReference>
<dbReference type="PANTHER" id="PTHR33695:SF1">
    <property type="entry name" value="LIPOPROTEIN SIGNAL PEPTIDASE"/>
    <property type="match status" value="1"/>
</dbReference>
<dbReference type="Pfam" id="PF01252">
    <property type="entry name" value="Peptidase_A8"/>
    <property type="match status" value="1"/>
</dbReference>
<dbReference type="PRINTS" id="PR00781">
    <property type="entry name" value="LIPOSIGPTASE"/>
</dbReference>
<dbReference type="PROSITE" id="PS00855">
    <property type="entry name" value="SPASE_II"/>
    <property type="match status" value="1"/>
</dbReference>
<sequence length="154" mass="17735">MYYYLITLAVIALDQLTKWIVVQNMEIGQKIEVIPGFLYWTSYRNDGAAWSILEGHMWFFYLITVIVIGIIIYIMQKYAKGKRLFSISLAFILGGAIGNFIDRILHQEVVDFVQTVWGNYYFPIFNVADAALSVGVVLMLVYVFVDDRKTKGIK</sequence>
<gene>
    <name evidence="1" type="primary">lspA</name>
    <name type="synonym">lsp</name>
    <name type="ordered locus">lin1958</name>
</gene>
<comment type="function">
    <text evidence="1">This protein specifically catalyzes the removal of signal peptides from prolipoproteins.</text>
</comment>
<comment type="catalytic activity">
    <reaction evidence="1">
        <text>Release of signal peptides from bacterial membrane prolipoproteins. Hydrolyzes -Xaa-Yaa-Zaa-|-(S,diacylglyceryl)Cys-, in which Xaa is hydrophobic (preferably Leu), and Yaa (Ala or Ser) and Zaa (Gly or Ala) have small, neutral side chains.</text>
        <dbReference type="EC" id="3.4.23.36"/>
    </reaction>
</comment>
<comment type="pathway">
    <text evidence="1">Protein modification; lipoprotein biosynthesis (signal peptide cleavage).</text>
</comment>
<comment type="subcellular location">
    <subcellularLocation>
        <location evidence="1">Cell membrane</location>
        <topology evidence="1">Multi-pass membrane protein</topology>
    </subcellularLocation>
</comment>
<comment type="similarity">
    <text evidence="1">Belongs to the peptidase A8 family.</text>
</comment>
<protein>
    <recommendedName>
        <fullName evidence="1">Lipoprotein signal peptidase</fullName>
        <ecNumber evidence="1">3.4.23.36</ecNumber>
    </recommendedName>
    <alternativeName>
        <fullName evidence="1">Prolipoprotein signal peptidase</fullName>
    </alternativeName>
    <alternativeName>
        <fullName evidence="1">Signal peptidase II</fullName>
        <shortName evidence="1">SPase II</shortName>
    </alternativeName>
</protein>
<accession>Q92AG4</accession>
<name>LSPA_LISIN</name>
<evidence type="ECO:0000255" key="1">
    <source>
        <dbReference type="HAMAP-Rule" id="MF_00161"/>
    </source>
</evidence>
<proteinExistence type="inferred from homology"/>
<reference key="1">
    <citation type="journal article" date="2001" name="Science">
        <title>Comparative genomics of Listeria species.</title>
        <authorList>
            <person name="Glaser P."/>
            <person name="Frangeul L."/>
            <person name="Buchrieser C."/>
            <person name="Rusniok C."/>
            <person name="Amend A."/>
            <person name="Baquero F."/>
            <person name="Berche P."/>
            <person name="Bloecker H."/>
            <person name="Brandt P."/>
            <person name="Chakraborty T."/>
            <person name="Charbit A."/>
            <person name="Chetouani F."/>
            <person name="Couve E."/>
            <person name="de Daruvar A."/>
            <person name="Dehoux P."/>
            <person name="Domann E."/>
            <person name="Dominguez-Bernal G."/>
            <person name="Duchaud E."/>
            <person name="Durant L."/>
            <person name="Dussurget O."/>
            <person name="Entian K.-D."/>
            <person name="Fsihi H."/>
            <person name="Garcia-del Portillo F."/>
            <person name="Garrido P."/>
            <person name="Gautier L."/>
            <person name="Goebel W."/>
            <person name="Gomez-Lopez N."/>
            <person name="Hain T."/>
            <person name="Hauf J."/>
            <person name="Jackson D."/>
            <person name="Jones L.-M."/>
            <person name="Kaerst U."/>
            <person name="Kreft J."/>
            <person name="Kuhn M."/>
            <person name="Kunst F."/>
            <person name="Kurapkat G."/>
            <person name="Madueno E."/>
            <person name="Maitournam A."/>
            <person name="Mata Vicente J."/>
            <person name="Ng E."/>
            <person name="Nedjari H."/>
            <person name="Nordsiek G."/>
            <person name="Novella S."/>
            <person name="de Pablos B."/>
            <person name="Perez-Diaz J.-C."/>
            <person name="Purcell R."/>
            <person name="Remmel B."/>
            <person name="Rose M."/>
            <person name="Schlueter T."/>
            <person name="Simoes N."/>
            <person name="Tierrez A."/>
            <person name="Vazquez-Boland J.-A."/>
            <person name="Voss H."/>
            <person name="Wehland J."/>
            <person name="Cossart P."/>
        </authorList>
    </citation>
    <scope>NUCLEOTIDE SEQUENCE [LARGE SCALE GENOMIC DNA]</scope>
    <source>
        <strain>ATCC BAA-680 / CLIP 11262</strain>
    </source>
</reference>
<feature type="chain" id="PRO_0000178791" description="Lipoprotein signal peptidase">
    <location>
        <begin position="1"/>
        <end position="154"/>
    </location>
</feature>
<feature type="transmembrane region" description="Helical" evidence="1">
    <location>
        <begin position="55"/>
        <end position="75"/>
    </location>
</feature>
<feature type="transmembrane region" description="Helical" evidence="1">
    <location>
        <begin position="84"/>
        <end position="104"/>
    </location>
</feature>
<feature type="transmembrane region" description="Helical" evidence="1">
    <location>
        <begin position="124"/>
        <end position="144"/>
    </location>
</feature>
<feature type="active site" evidence="1">
    <location>
        <position position="111"/>
    </location>
</feature>
<feature type="active site" evidence="1">
    <location>
        <position position="129"/>
    </location>
</feature>